<sequence length="277" mass="31116">MKIIETKNLNYSYTQSSIRSIENVNFSVLDGEWITIVGKNGSGKSTLIRLLDGLLKADSGKIIIDGLTLSEKTLWEIRKKIGIVFQNPDNQFVSGSVIEDVAFGMENYQIPQEEMLVRAQQALKTVGMIDFAEKSPVRLSGGQKQRVAIAGVLAIQPKILILDEAASMLDPDGRDEVWQTIKKLKEQQNLTVISVNHDLNELNLSDRVILLNDGKIAADTKINQLFSDSELLSKNDLKLPFLQQLQKDLRESGINFTQEYNHQRELVNFLWKSISGT</sequence>
<dbReference type="EC" id="7.-.-.-" evidence="1"/>
<dbReference type="EMBL" id="CP000411">
    <property type="protein sequence ID" value="ABJ56987.1"/>
    <property type="molecule type" value="Genomic_DNA"/>
</dbReference>
<dbReference type="RefSeq" id="WP_002818898.1">
    <property type="nucleotide sequence ID" value="NC_008528.1"/>
</dbReference>
<dbReference type="SMR" id="Q04EY5"/>
<dbReference type="STRING" id="203123.OEOE_1086"/>
<dbReference type="KEGG" id="ooe:OEOE_1086"/>
<dbReference type="eggNOG" id="COG1122">
    <property type="taxonomic scope" value="Bacteria"/>
</dbReference>
<dbReference type="HOGENOM" id="CLU_000604_1_22_9"/>
<dbReference type="Proteomes" id="UP000000774">
    <property type="component" value="Chromosome"/>
</dbReference>
<dbReference type="GO" id="GO:0043190">
    <property type="term" value="C:ATP-binding cassette (ABC) transporter complex"/>
    <property type="evidence" value="ECO:0007669"/>
    <property type="project" value="TreeGrafter"/>
</dbReference>
<dbReference type="GO" id="GO:0005524">
    <property type="term" value="F:ATP binding"/>
    <property type="evidence" value="ECO:0007669"/>
    <property type="project" value="UniProtKB-KW"/>
</dbReference>
<dbReference type="GO" id="GO:0016887">
    <property type="term" value="F:ATP hydrolysis activity"/>
    <property type="evidence" value="ECO:0007669"/>
    <property type="project" value="InterPro"/>
</dbReference>
<dbReference type="GO" id="GO:0042626">
    <property type="term" value="F:ATPase-coupled transmembrane transporter activity"/>
    <property type="evidence" value="ECO:0007669"/>
    <property type="project" value="TreeGrafter"/>
</dbReference>
<dbReference type="CDD" id="cd03225">
    <property type="entry name" value="ABC_cobalt_CbiO_domain1"/>
    <property type="match status" value="1"/>
</dbReference>
<dbReference type="FunFam" id="3.40.50.300:FF:000224">
    <property type="entry name" value="Energy-coupling factor transporter ATP-binding protein EcfA"/>
    <property type="match status" value="1"/>
</dbReference>
<dbReference type="Gene3D" id="3.40.50.300">
    <property type="entry name" value="P-loop containing nucleotide triphosphate hydrolases"/>
    <property type="match status" value="1"/>
</dbReference>
<dbReference type="InterPro" id="IPR003593">
    <property type="entry name" value="AAA+_ATPase"/>
</dbReference>
<dbReference type="InterPro" id="IPR003439">
    <property type="entry name" value="ABC_transporter-like_ATP-bd"/>
</dbReference>
<dbReference type="InterPro" id="IPR017871">
    <property type="entry name" value="ABC_transporter-like_CS"/>
</dbReference>
<dbReference type="InterPro" id="IPR015856">
    <property type="entry name" value="ABC_transpr_CbiO/EcfA_su"/>
</dbReference>
<dbReference type="InterPro" id="IPR050095">
    <property type="entry name" value="ECF_ABC_transporter_ATP-bd"/>
</dbReference>
<dbReference type="InterPro" id="IPR030947">
    <property type="entry name" value="EcfA_1"/>
</dbReference>
<dbReference type="InterPro" id="IPR027417">
    <property type="entry name" value="P-loop_NTPase"/>
</dbReference>
<dbReference type="NCBIfam" id="TIGR04520">
    <property type="entry name" value="ECF_ATPase_1"/>
    <property type="match status" value="1"/>
</dbReference>
<dbReference type="NCBIfam" id="NF010167">
    <property type="entry name" value="PRK13648.1"/>
    <property type="match status" value="1"/>
</dbReference>
<dbReference type="PANTHER" id="PTHR43553:SF24">
    <property type="entry name" value="ENERGY-COUPLING FACTOR TRANSPORTER ATP-BINDING PROTEIN ECFA1"/>
    <property type="match status" value="1"/>
</dbReference>
<dbReference type="PANTHER" id="PTHR43553">
    <property type="entry name" value="HEAVY METAL TRANSPORTER"/>
    <property type="match status" value="1"/>
</dbReference>
<dbReference type="Pfam" id="PF00005">
    <property type="entry name" value="ABC_tran"/>
    <property type="match status" value="1"/>
</dbReference>
<dbReference type="SMART" id="SM00382">
    <property type="entry name" value="AAA"/>
    <property type="match status" value="1"/>
</dbReference>
<dbReference type="SUPFAM" id="SSF52540">
    <property type="entry name" value="P-loop containing nucleoside triphosphate hydrolases"/>
    <property type="match status" value="1"/>
</dbReference>
<dbReference type="PROSITE" id="PS00211">
    <property type="entry name" value="ABC_TRANSPORTER_1"/>
    <property type="match status" value="1"/>
</dbReference>
<dbReference type="PROSITE" id="PS50893">
    <property type="entry name" value="ABC_TRANSPORTER_2"/>
    <property type="match status" value="1"/>
</dbReference>
<dbReference type="PROSITE" id="PS51246">
    <property type="entry name" value="CBIO"/>
    <property type="match status" value="1"/>
</dbReference>
<organism>
    <name type="scientific">Oenococcus oeni (strain ATCC BAA-331 / PSU-1)</name>
    <dbReference type="NCBI Taxonomy" id="203123"/>
    <lineage>
        <taxon>Bacteria</taxon>
        <taxon>Bacillati</taxon>
        <taxon>Bacillota</taxon>
        <taxon>Bacilli</taxon>
        <taxon>Lactobacillales</taxon>
        <taxon>Lactobacillaceae</taxon>
        <taxon>Oenococcus</taxon>
    </lineage>
</organism>
<keyword id="KW-0067">ATP-binding</keyword>
<keyword id="KW-1003">Cell membrane</keyword>
<keyword id="KW-0472">Membrane</keyword>
<keyword id="KW-0547">Nucleotide-binding</keyword>
<keyword id="KW-1185">Reference proteome</keyword>
<keyword id="KW-1278">Translocase</keyword>
<keyword id="KW-0813">Transport</keyword>
<protein>
    <recommendedName>
        <fullName evidence="1">Energy-coupling factor transporter ATP-binding protein EcfA1</fullName>
        <shortName evidence="1">ECF transporter A component EcfA1</shortName>
        <ecNumber evidence="1">7.-.-.-</ecNumber>
    </recommendedName>
</protein>
<proteinExistence type="inferred from homology"/>
<reference key="1">
    <citation type="journal article" date="2006" name="Proc. Natl. Acad. Sci. U.S.A.">
        <title>Comparative genomics of the lactic acid bacteria.</title>
        <authorList>
            <person name="Makarova K.S."/>
            <person name="Slesarev A."/>
            <person name="Wolf Y.I."/>
            <person name="Sorokin A."/>
            <person name="Mirkin B."/>
            <person name="Koonin E.V."/>
            <person name="Pavlov A."/>
            <person name="Pavlova N."/>
            <person name="Karamychev V."/>
            <person name="Polouchine N."/>
            <person name="Shakhova V."/>
            <person name="Grigoriev I."/>
            <person name="Lou Y."/>
            <person name="Rohksar D."/>
            <person name="Lucas S."/>
            <person name="Huang K."/>
            <person name="Goodstein D.M."/>
            <person name="Hawkins T."/>
            <person name="Plengvidhya V."/>
            <person name="Welker D."/>
            <person name="Hughes J."/>
            <person name="Goh Y."/>
            <person name="Benson A."/>
            <person name="Baldwin K."/>
            <person name="Lee J.-H."/>
            <person name="Diaz-Muniz I."/>
            <person name="Dosti B."/>
            <person name="Smeianov V."/>
            <person name="Wechter W."/>
            <person name="Barabote R."/>
            <person name="Lorca G."/>
            <person name="Altermann E."/>
            <person name="Barrangou R."/>
            <person name="Ganesan B."/>
            <person name="Xie Y."/>
            <person name="Rawsthorne H."/>
            <person name="Tamir D."/>
            <person name="Parker C."/>
            <person name="Breidt F."/>
            <person name="Broadbent J.R."/>
            <person name="Hutkins R."/>
            <person name="O'Sullivan D."/>
            <person name="Steele J."/>
            <person name="Unlu G."/>
            <person name="Saier M.H. Jr."/>
            <person name="Klaenhammer T."/>
            <person name="Richardson P."/>
            <person name="Kozyavkin S."/>
            <person name="Weimer B.C."/>
            <person name="Mills D.A."/>
        </authorList>
    </citation>
    <scope>NUCLEOTIDE SEQUENCE [LARGE SCALE GENOMIC DNA]</scope>
    <source>
        <strain>ATCC BAA-331 / PSU-1</strain>
    </source>
</reference>
<feature type="chain" id="PRO_0000287977" description="Energy-coupling factor transporter ATP-binding protein EcfA1">
    <location>
        <begin position="1"/>
        <end position="277"/>
    </location>
</feature>
<feature type="domain" description="ABC transporter" evidence="1">
    <location>
        <begin position="4"/>
        <end position="238"/>
    </location>
</feature>
<feature type="binding site" evidence="1">
    <location>
        <begin position="38"/>
        <end position="45"/>
    </location>
    <ligand>
        <name>ATP</name>
        <dbReference type="ChEBI" id="CHEBI:30616"/>
    </ligand>
</feature>
<name>ECFA1_OENOB</name>
<gene>
    <name evidence="1" type="primary">ecfA1</name>
    <name type="synonym">cbiO1</name>
    <name type="ordered locus">OEOE_1086</name>
</gene>
<comment type="function">
    <text evidence="1">ATP-binding (A) component of a common energy-coupling factor (ECF) ABC-transporter complex. Unlike classic ABC transporters this ECF transporter provides the energy necessary to transport a number of different substrates.</text>
</comment>
<comment type="subunit">
    <text evidence="1">Forms a stable energy-coupling factor (ECF) transporter complex composed of 2 membrane-embedded substrate-binding proteins (S component), 2 ATP-binding proteins (A component) and 2 transmembrane proteins (T component).</text>
</comment>
<comment type="subcellular location">
    <subcellularLocation>
        <location evidence="1">Cell membrane</location>
        <topology evidence="1">Peripheral membrane protein</topology>
    </subcellularLocation>
</comment>
<comment type="similarity">
    <text evidence="1">Belongs to the ABC transporter superfamily. Energy-coupling factor EcfA family.</text>
</comment>
<evidence type="ECO:0000255" key="1">
    <source>
        <dbReference type="HAMAP-Rule" id="MF_01710"/>
    </source>
</evidence>
<accession>Q04EY5</accession>